<name>TGT_SHIB3</name>
<evidence type="ECO:0000255" key="1">
    <source>
        <dbReference type="HAMAP-Rule" id="MF_00168"/>
    </source>
</evidence>
<protein>
    <recommendedName>
        <fullName evidence="1">Queuine tRNA-ribosyltransferase</fullName>
        <ecNumber evidence="1">2.4.2.29</ecNumber>
    </recommendedName>
    <alternativeName>
        <fullName evidence="1">Guanine insertion enzyme</fullName>
    </alternativeName>
    <alternativeName>
        <fullName evidence="1">tRNA-guanine transglycosylase</fullName>
    </alternativeName>
</protein>
<sequence length="375" mass="42594">MKFELDTTDGRARRGRLVFDRGVVETPCFMPVGTYGTVKGMTPEEVEATGAQIILGNTFHLWLRPGQEIMKLHGDLHDFMQWKGPILTDSGGFQVFSLGDIRKITEQGVHFRNPINGDPIFLDPEKSMEIQYDLGSDIVMIFDECTPYPADWDYAKRSMEMSLRWAKRSRERFDSLGNKNALFGIIQGSVYEDLRDISVKGLVDIGFDGYAVGGLAVGEPKADMHRILEHVCPQIPADKPRYLMGVGKPEDLVEGVRRGIDMFDCVMPTRNARNGHLFVTDGVVKIRNAKYKSDTGPLDPECDCYTCRNYSRAYLHHLDRCNEILGARLNTIHNLRYYQRLMAGLRKAIEEGKLESFVTDFYQRQGREVPPLNVD</sequence>
<reference key="1">
    <citation type="submission" date="2008-05" db="EMBL/GenBank/DDBJ databases">
        <title>Complete sequence of Shigella boydii serotype 18 strain BS512.</title>
        <authorList>
            <person name="Rasko D.A."/>
            <person name="Rosovitz M."/>
            <person name="Maurelli A.T."/>
            <person name="Myers G."/>
            <person name="Seshadri R."/>
            <person name="Cer R."/>
            <person name="Jiang L."/>
            <person name="Ravel J."/>
            <person name="Sebastian Y."/>
        </authorList>
    </citation>
    <scope>NUCLEOTIDE SEQUENCE [LARGE SCALE GENOMIC DNA]</scope>
    <source>
        <strain>CDC 3083-94 / BS512</strain>
    </source>
</reference>
<organism>
    <name type="scientific">Shigella boydii serotype 18 (strain CDC 3083-94 / BS512)</name>
    <dbReference type="NCBI Taxonomy" id="344609"/>
    <lineage>
        <taxon>Bacteria</taxon>
        <taxon>Pseudomonadati</taxon>
        <taxon>Pseudomonadota</taxon>
        <taxon>Gammaproteobacteria</taxon>
        <taxon>Enterobacterales</taxon>
        <taxon>Enterobacteriaceae</taxon>
        <taxon>Shigella</taxon>
    </lineage>
</organism>
<comment type="function">
    <text evidence="1">Catalyzes the base-exchange of a guanine (G) residue with the queuine precursor 7-aminomethyl-7-deazaguanine (PreQ1) at position 34 (anticodon wobble position) in tRNAs with GU(N) anticodons (tRNA-Asp, -Asn, -His and -Tyr). Catalysis occurs through a double-displacement mechanism. The nucleophile active site attacks the C1' of nucleotide 34 to detach the guanine base from the RNA, forming a covalent enzyme-RNA intermediate. The proton acceptor active site deprotonates the incoming PreQ1, allowing a nucleophilic attack on the C1' of the ribose to form the product. After dissociation, two additional enzymatic reactions on the tRNA convert PreQ1 to queuine (Q), resulting in the hypermodified nucleoside queuosine (7-(((4,5-cis-dihydroxy-2-cyclopenten-1-yl)amino)methyl)-7-deazaguanosine).</text>
</comment>
<comment type="catalytic activity">
    <reaction evidence="1">
        <text>7-aminomethyl-7-carbaguanine + guanosine(34) in tRNA = 7-aminomethyl-7-carbaguanosine(34) in tRNA + guanine</text>
        <dbReference type="Rhea" id="RHEA:24104"/>
        <dbReference type="Rhea" id="RHEA-COMP:10341"/>
        <dbReference type="Rhea" id="RHEA-COMP:10342"/>
        <dbReference type="ChEBI" id="CHEBI:16235"/>
        <dbReference type="ChEBI" id="CHEBI:58703"/>
        <dbReference type="ChEBI" id="CHEBI:74269"/>
        <dbReference type="ChEBI" id="CHEBI:82833"/>
        <dbReference type="EC" id="2.4.2.29"/>
    </reaction>
</comment>
<comment type="cofactor">
    <cofactor evidence="1">
        <name>Zn(2+)</name>
        <dbReference type="ChEBI" id="CHEBI:29105"/>
    </cofactor>
    <text evidence="1">Binds 1 zinc ion per subunit.</text>
</comment>
<comment type="pathway">
    <text evidence="1">tRNA modification; tRNA-queuosine biosynthesis.</text>
</comment>
<comment type="subunit">
    <text evidence="1">Homodimer. Within each dimer, one monomer is responsible for RNA recognition and catalysis, while the other monomer binds to the replacement base PreQ1.</text>
</comment>
<comment type="similarity">
    <text evidence="1">Belongs to the queuine tRNA-ribosyltransferase family.</text>
</comment>
<accession>B2U4K7</accession>
<proteinExistence type="inferred from homology"/>
<keyword id="KW-0328">Glycosyltransferase</keyword>
<keyword id="KW-0479">Metal-binding</keyword>
<keyword id="KW-0671">Queuosine biosynthesis</keyword>
<keyword id="KW-1185">Reference proteome</keyword>
<keyword id="KW-0808">Transferase</keyword>
<keyword id="KW-0819">tRNA processing</keyword>
<keyword id="KW-0862">Zinc</keyword>
<dbReference type="EC" id="2.4.2.29" evidence="1"/>
<dbReference type="EMBL" id="CP001063">
    <property type="protein sequence ID" value="ACD07043.1"/>
    <property type="molecule type" value="Genomic_DNA"/>
</dbReference>
<dbReference type="RefSeq" id="WP_000667319.1">
    <property type="nucleotide sequence ID" value="NC_010658.1"/>
</dbReference>
<dbReference type="SMR" id="B2U4K7"/>
<dbReference type="STRING" id="344609.SbBS512_E0325"/>
<dbReference type="GeneID" id="93777054"/>
<dbReference type="KEGG" id="sbc:SbBS512_E0325"/>
<dbReference type="HOGENOM" id="CLU_022060_0_1_6"/>
<dbReference type="UniPathway" id="UPA00392"/>
<dbReference type="Proteomes" id="UP000001030">
    <property type="component" value="Chromosome"/>
</dbReference>
<dbReference type="GO" id="GO:0005829">
    <property type="term" value="C:cytosol"/>
    <property type="evidence" value="ECO:0007669"/>
    <property type="project" value="TreeGrafter"/>
</dbReference>
<dbReference type="GO" id="GO:0046872">
    <property type="term" value="F:metal ion binding"/>
    <property type="evidence" value="ECO:0007669"/>
    <property type="project" value="UniProtKB-KW"/>
</dbReference>
<dbReference type="GO" id="GO:0008479">
    <property type="term" value="F:tRNA-guanosine(34) queuine transglycosylase activity"/>
    <property type="evidence" value="ECO:0007669"/>
    <property type="project" value="UniProtKB-UniRule"/>
</dbReference>
<dbReference type="GO" id="GO:0008616">
    <property type="term" value="P:queuosine biosynthetic process"/>
    <property type="evidence" value="ECO:0007669"/>
    <property type="project" value="UniProtKB-UniRule"/>
</dbReference>
<dbReference type="GO" id="GO:0002099">
    <property type="term" value="P:tRNA wobble guanine modification"/>
    <property type="evidence" value="ECO:0007669"/>
    <property type="project" value="TreeGrafter"/>
</dbReference>
<dbReference type="GO" id="GO:0101030">
    <property type="term" value="P:tRNA-guanine transglycosylation"/>
    <property type="evidence" value="ECO:0007669"/>
    <property type="project" value="InterPro"/>
</dbReference>
<dbReference type="FunFam" id="3.20.20.105:FF:000001">
    <property type="entry name" value="Queuine tRNA-ribosyltransferase"/>
    <property type="match status" value="1"/>
</dbReference>
<dbReference type="Gene3D" id="3.20.20.105">
    <property type="entry name" value="Queuine tRNA-ribosyltransferase-like"/>
    <property type="match status" value="1"/>
</dbReference>
<dbReference type="HAMAP" id="MF_00168">
    <property type="entry name" value="Q_tRNA_Tgt"/>
    <property type="match status" value="1"/>
</dbReference>
<dbReference type="InterPro" id="IPR050076">
    <property type="entry name" value="ArchSynthase1/Queuine_TRR"/>
</dbReference>
<dbReference type="InterPro" id="IPR004803">
    <property type="entry name" value="TGT"/>
</dbReference>
<dbReference type="InterPro" id="IPR036511">
    <property type="entry name" value="TGT-like_sf"/>
</dbReference>
<dbReference type="InterPro" id="IPR002616">
    <property type="entry name" value="tRNA_ribo_trans-like"/>
</dbReference>
<dbReference type="NCBIfam" id="TIGR00430">
    <property type="entry name" value="Q_tRNA_tgt"/>
    <property type="match status" value="1"/>
</dbReference>
<dbReference type="NCBIfam" id="TIGR00449">
    <property type="entry name" value="tgt_general"/>
    <property type="match status" value="1"/>
</dbReference>
<dbReference type="PANTHER" id="PTHR46499">
    <property type="entry name" value="QUEUINE TRNA-RIBOSYLTRANSFERASE"/>
    <property type="match status" value="1"/>
</dbReference>
<dbReference type="PANTHER" id="PTHR46499:SF1">
    <property type="entry name" value="QUEUINE TRNA-RIBOSYLTRANSFERASE"/>
    <property type="match status" value="1"/>
</dbReference>
<dbReference type="Pfam" id="PF01702">
    <property type="entry name" value="TGT"/>
    <property type="match status" value="1"/>
</dbReference>
<dbReference type="SUPFAM" id="SSF51713">
    <property type="entry name" value="tRNA-guanine transglycosylase"/>
    <property type="match status" value="1"/>
</dbReference>
<feature type="chain" id="PRO_1000097565" description="Queuine tRNA-ribosyltransferase">
    <location>
        <begin position="1"/>
        <end position="375"/>
    </location>
</feature>
<feature type="region of interest" description="RNA binding" evidence="1">
    <location>
        <begin position="245"/>
        <end position="251"/>
    </location>
</feature>
<feature type="region of interest" description="RNA binding; important for wobble base 34 recognition" evidence="1">
    <location>
        <begin position="269"/>
        <end position="273"/>
    </location>
</feature>
<feature type="active site" description="Proton acceptor" evidence="1">
    <location>
        <position position="89"/>
    </location>
</feature>
<feature type="active site" description="Nucleophile" evidence="1">
    <location>
        <position position="264"/>
    </location>
</feature>
<feature type="binding site" evidence="1">
    <location>
        <begin position="89"/>
        <end position="93"/>
    </location>
    <ligand>
        <name>substrate</name>
    </ligand>
</feature>
<feature type="binding site" evidence="1">
    <location>
        <position position="143"/>
    </location>
    <ligand>
        <name>substrate</name>
    </ligand>
</feature>
<feature type="binding site" evidence="1">
    <location>
        <position position="187"/>
    </location>
    <ligand>
        <name>substrate</name>
    </ligand>
</feature>
<feature type="binding site" evidence="1">
    <location>
        <position position="214"/>
    </location>
    <ligand>
        <name>substrate</name>
    </ligand>
</feature>
<feature type="binding site" evidence="1">
    <location>
        <position position="302"/>
    </location>
    <ligand>
        <name>Zn(2+)</name>
        <dbReference type="ChEBI" id="CHEBI:29105"/>
    </ligand>
</feature>
<feature type="binding site" evidence="1">
    <location>
        <position position="304"/>
    </location>
    <ligand>
        <name>Zn(2+)</name>
        <dbReference type="ChEBI" id="CHEBI:29105"/>
    </ligand>
</feature>
<feature type="binding site" evidence="1">
    <location>
        <position position="307"/>
    </location>
    <ligand>
        <name>Zn(2+)</name>
        <dbReference type="ChEBI" id="CHEBI:29105"/>
    </ligand>
</feature>
<feature type="binding site" evidence="1">
    <location>
        <position position="333"/>
    </location>
    <ligand>
        <name>Zn(2+)</name>
        <dbReference type="ChEBI" id="CHEBI:29105"/>
    </ligand>
</feature>
<gene>
    <name evidence="1" type="primary">tgt</name>
    <name type="ordered locus">SbBS512_E0325</name>
</gene>